<keyword id="KW-0997">Cell inner membrane</keyword>
<keyword id="KW-1003">Cell membrane</keyword>
<keyword id="KW-0460">Magnesium</keyword>
<keyword id="KW-0472">Membrane</keyword>
<keyword id="KW-0808">Transferase</keyword>
<keyword id="KW-0812">Transmembrane</keyword>
<keyword id="KW-1133">Transmembrane helix</keyword>
<keyword id="KW-0831">Ubiquinone biosynthesis</keyword>
<gene>
    <name evidence="1" type="primary">ubiA</name>
    <name type="ordered locus">Sbal195_4014</name>
</gene>
<proteinExistence type="inferred from homology"/>
<sequence>MNLKQKWDVYSRLTRIDRPIGTLLLLWPCLMALMLAAGGMPDLKVLVIFIIGVVIMRACGCIINDYADRDLDSFVERTRSRPLASGEISTKEALILFVILGLSAFGLVLLLNGLVVKLSVVGIILTIIYPFTKRITNMPQMFLGIVWSWSIPMAYAAQTGEVPMEAWWLFAANWCWTVAYDTMYAMVDRDDDLKVGIKSTAILFGKYDRQIIGLFQLAALACFIAAGWSADRGLLYGLGILTFVGFSTYQQMLIFDRERAPCFKAFLNNNWAGLALFVGLGADYLI</sequence>
<evidence type="ECO:0000255" key="1">
    <source>
        <dbReference type="HAMAP-Rule" id="MF_01635"/>
    </source>
</evidence>
<protein>
    <recommendedName>
        <fullName evidence="1">4-hydroxybenzoate octaprenyltransferase</fullName>
        <ecNumber evidence="1">2.5.1.39</ecNumber>
    </recommendedName>
    <alternativeName>
        <fullName evidence="1">4-HB polyprenyltransferase</fullName>
    </alternativeName>
</protein>
<accession>A9L4Q8</accession>
<reference key="1">
    <citation type="submission" date="2007-11" db="EMBL/GenBank/DDBJ databases">
        <title>Complete sequence of chromosome of Shewanella baltica OS195.</title>
        <authorList>
            <consortium name="US DOE Joint Genome Institute"/>
            <person name="Copeland A."/>
            <person name="Lucas S."/>
            <person name="Lapidus A."/>
            <person name="Barry K."/>
            <person name="Glavina del Rio T."/>
            <person name="Dalin E."/>
            <person name="Tice H."/>
            <person name="Pitluck S."/>
            <person name="Chain P."/>
            <person name="Malfatti S."/>
            <person name="Shin M."/>
            <person name="Vergez L."/>
            <person name="Schmutz J."/>
            <person name="Larimer F."/>
            <person name="Land M."/>
            <person name="Hauser L."/>
            <person name="Kyrpides N."/>
            <person name="Kim E."/>
            <person name="Brettar I."/>
            <person name="Rodrigues J."/>
            <person name="Konstantinidis K."/>
            <person name="Klappenbach J."/>
            <person name="Hofle M."/>
            <person name="Tiedje J."/>
            <person name="Richardson P."/>
        </authorList>
    </citation>
    <scope>NUCLEOTIDE SEQUENCE [LARGE SCALE GENOMIC DNA]</scope>
    <source>
        <strain>OS195</strain>
    </source>
</reference>
<dbReference type="EC" id="2.5.1.39" evidence="1"/>
<dbReference type="EMBL" id="CP000891">
    <property type="protein sequence ID" value="ABX51174.1"/>
    <property type="molecule type" value="Genomic_DNA"/>
</dbReference>
<dbReference type="RefSeq" id="WP_012197690.1">
    <property type="nucleotide sequence ID" value="NC_009997.1"/>
</dbReference>
<dbReference type="SMR" id="A9L4Q8"/>
<dbReference type="GeneID" id="11774012"/>
<dbReference type="KEGG" id="sbn:Sbal195_4014"/>
<dbReference type="HOGENOM" id="CLU_034879_1_0_6"/>
<dbReference type="UniPathway" id="UPA00232"/>
<dbReference type="Proteomes" id="UP000000770">
    <property type="component" value="Chromosome"/>
</dbReference>
<dbReference type="GO" id="GO:0005886">
    <property type="term" value="C:plasma membrane"/>
    <property type="evidence" value="ECO:0007669"/>
    <property type="project" value="UniProtKB-SubCell"/>
</dbReference>
<dbReference type="GO" id="GO:0008412">
    <property type="term" value="F:4-hydroxybenzoate polyprenyltransferase activity"/>
    <property type="evidence" value="ECO:0007669"/>
    <property type="project" value="UniProtKB-UniRule"/>
</dbReference>
<dbReference type="GO" id="GO:0006744">
    <property type="term" value="P:ubiquinone biosynthetic process"/>
    <property type="evidence" value="ECO:0007669"/>
    <property type="project" value="UniProtKB-UniRule"/>
</dbReference>
<dbReference type="CDD" id="cd13959">
    <property type="entry name" value="PT_UbiA_COQ2"/>
    <property type="match status" value="1"/>
</dbReference>
<dbReference type="FunFam" id="1.10.357.140:FF:000002">
    <property type="entry name" value="4-hydroxybenzoate octaprenyltransferase"/>
    <property type="match status" value="1"/>
</dbReference>
<dbReference type="FunFam" id="1.20.120.1780:FF:000001">
    <property type="entry name" value="4-hydroxybenzoate octaprenyltransferase"/>
    <property type="match status" value="1"/>
</dbReference>
<dbReference type="Gene3D" id="1.10.357.140">
    <property type="entry name" value="UbiA prenyltransferase"/>
    <property type="match status" value="1"/>
</dbReference>
<dbReference type="Gene3D" id="1.20.120.1780">
    <property type="entry name" value="UbiA prenyltransferase"/>
    <property type="match status" value="1"/>
</dbReference>
<dbReference type="HAMAP" id="MF_01635">
    <property type="entry name" value="UbiA"/>
    <property type="match status" value="1"/>
</dbReference>
<dbReference type="InterPro" id="IPR006370">
    <property type="entry name" value="HB_polyprenyltransferase-like"/>
</dbReference>
<dbReference type="InterPro" id="IPR039653">
    <property type="entry name" value="Prenyltransferase"/>
</dbReference>
<dbReference type="InterPro" id="IPR000537">
    <property type="entry name" value="UbiA_prenyltransferase"/>
</dbReference>
<dbReference type="InterPro" id="IPR030470">
    <property type="entry name" value="UbiA_prenylTrfase_CS"/>
</dbReference>
<dbReference type="InterPro" id="IPR044878">
    <property type="entry name" value="UbiA_sf"/>
</dbReference>
<dbReference type="NCBIfam" id="TIGR01474">
    <property type="entry name" value="ubiA_proteo"/>
    <property type="match status" value="1"/>
</dbReference>
<dbReference type="PANTHER" id="PTHR11048:SF28">
    <property type="entry name" value="4-HYDROXYBENZOATE POLYPRENYLTRANSFERASE, MITOCHONDRIAL"/>
    <property type="match status" value="1"/>
</dbReference>
<dbReference type="PANTHER" id="PTHR11048">
    <property type="entry name" value="PRENYLTRANSFERASES"/>
    <property type="match status" value="1"/>
</dbReference>
<dbReference type="Pfam" id="PF01040">
    <property type="entry name" value="UbiA"/>
    <property type="match status" value="1"/>
</dbReference>
<dbReference type="PROSITE" id="PS00943">
    <property type="entry name" value="UBIA"/>
    <property type="match status" value="1"/>
</dbReference>
<feature type="chain" id="PRO_1000088182" description="4-hydroxybenzoate octaprenyltransferase">
    <location>
        <begin position="1"/>
        <end position="286"/>
    </location>
</feature>
<feature type="transmembrane region" description="Helical" evidence="1">
    <location>
        <begin position="21"/>
        <end position="40"/>
    </location>
</feature>
<feature type="transmembrane region" description="Helical" evidence="1">
    <location>
        <begin position="95"/>
        <end position="115"/>
    </location>
</feature>
<feature type="transmembrane region" description="Helical" evidence="1">
    <location>
        <begin position="142"/>
        <end position="162"/>
    </location>
</feature>
<feature type="transmembrane region" description="Helical" evidence="1">
    <location>
        <begin position="167"/>
        <end position="187"/>
    </location>
</feature>
<feature type="transmembrane region" description="Helical" evidence="1">
    <location>
        <begin position="210"/>
        <end position="230"/>
    </location>
</feature>
<feature type="transmembrane region" description="Helical" evidence="1">
    <location>
        <begin position="235"/>
        <end position="255"/>
    </location>
</feature>
<feature type="transmembrane region" description="Helical" evidence="1">
    <location>
        <begin position="266"/>
        <end position="286"/>
    </location>
</feature>
<organism>
    <name type="scientific">Shewanella baltica (strain OS195)</name>
    <dbReference type="NCBI Taxonomy" id="399599"/>
    <lineage>
        <taxon>Bacteria</taxon>
        <taxon>Pseudomonadati</taxon>
        <taxon>Pseudomonadota</taxon>
        <taxon>Gammaproteobacteria</taxon>
        <taxon>Alteromonadales</taxon>
        <taxon>Shewanellaceae</taxon>
        <taxon>Shewanella</taxon>
    </lineage>
</organism>
<name>UBIA_SHEB9</name>
<comment type="function">
    <text evidence="1">Catalyzes the prenylation of para-hydroxybenzoate (PHB) with an all-trans polyprenyl group. Mediates the second step in the final reaction sequence of ubiquinone-8 (UQ-8) biosynthesis, which is the condensation of the polyisoprenoid side chain with PHB, generating the first membrane-bound Q intermediate 3-octaprenyl-4-hydroxybenzoate.</text>
</comment>
<comment type="catalytic activity">
    <reaction evidence="1">
        <text>all-trans-octaprenyl diphosphate + 4-hydroxybenzoate = 4-hydroxy-3-(all-trans-octaprenyl)benzoate + diphosphate</text>
        <dbReference type="Rhea" id="RHEA:27782"/>
        <dbReference type="ChEBI" id="CHEBI:1617"/>
        <dbReference type="ChEBI" id="CHEBI:17879"/>
        <dbReference type="ChEBI" id="CHEBI:33019"/>
        <dbReference type="ChEBI" id="CHEBI:57711"/>
        <dbReference type="EC" id="2.5.1.39"/>
    </reaction>
</comment>
<comment type="cofactor">
    <cofactor evidence="1">
        <name>Mg(2+)</name>
        <dbReference type="ChEBI" id="CHEBI:18420"/>
    </cofactor>
</comment>
<comment type="pathway">
    <text evidence="1">Cofactor biosynthesis; ubiquinone biosynthesis.</text>
</comment>
<comment type="subcellular location">
    <subcellularLocation>
        <location evidence="1">Cell inner membrane</location>
        <topology evidence="1">Multi-pass membrane protein</topology>
    </subcellularLocation>
</comment>
<comment type="similarity">
    <text evidence="1">Belongs to the UbiA prenyltransferase family.</text>
</comment>